<evidence type="ECO:0000255" key="1">
    <source>
        <dbReference type="HAMAP-Rule" id="MF_01522"/>
    </source>
</evidence>
<accession>P0DB56</accession>
<accession>Q79XJ5</accession>
<accession>Q8K6Y2</accession>
<sequence>MSDSHLTAFDKASKAGFIIALGIVYGDIGTSPLYTMQSLVENQGGVNQVSESFILGSISLIIWTLTLITTIKYVLIALKADNHHEGGIFSLFTLVRKMSPWLIVPAMIGGATLLSDGALTPAVTVTSAIEGLKAVPGLSHIYQNQTNVIITTLVILIVLFGIQRFGTGFIGKIFGPVMFIWFSFLGVSGFFNMLGHLEIFKAINPYYALHLLFSPENHRGIFILGSIFLATTGAEALYSDLGHVGRGNIYVSWPFVKMCIVLSYCGQAAWILANKHSGIELNPFFASVPSQLRVYLVSLATLAAIIASQALISGSFTLVSEAMRLKIFPLFRVTYPGANLGQLYIPVINWILFAVTSCTVLAFRTSAHMEAAYGLAITITMLMTTILLKYYLIKKGTRPILAHLVMAFFALVEFIFFLASAIKFMHGGYAVVILALAIVFVMFIWHAGTRIVFKYVKSLNLNDYKEQIKQLRDDVCFDLYQTNVVYLSNRMQDHMIDRSILYSILDKRPKRAQVYWFVNVQVTDEPYTAKYKVDMMGTDYMVRVNLYLGFRMPQTVPRYLRTIVQDLMESGRLPKQEQEYTITPGRDVGDFRFVLIEERVSNARQLSNFERFIMQTKASIKHVTASPMRWFGLQYSEVTLEVVPLILSDILKLPIKELVPVEDSEA</sequence>
<feature type="chain" id="PRO_0000209062" description="Probable potassium transport system protein Kup">
    <location>
        <begin position="1"/>
        <end position="666"/>
    </location>
</feature>
<feature type="transmembrane region" description="Helical" evidence="1">
    <location>
        <begin position="16"/>
        <end position="36"/>
    </location>
</feature>
<feature type="transmembrane region" description="Helical" evidence="1">
    <location>
        <begin position="58"/>
        <end position="78"/>
    </location>
</feature>
<feature type="transmembrane region" description="Helical" evidence="1">
    <location>
        <begin position="100"/>
        <end position="120"/>
    </location>
</feature>
<feature type="transmembrane region" description="Helical" evidence="1">
    <location>
        <begin position="149"/>
        <end position="169"/>
    </location>
</feature>
<feature type="transmembrane region" description="Helical" evidence="1">
    <location>
        <begin position="173"/>
        <end position="193"/>
    </location>
</feature>
<feature type="transmembrane region" description="Helical" evidence="1">
    <location>
        <begin position="221"/>
        <end position="241"/>
    </location>
</feature>
<feature type="transmembrane region" description="Helical" evidence="1">
    <location>
        <begin position="253"/>
        <end position="273"/>
    </location>
</feature>
<feature type="transmembrane region" description="Helical" evidence="1">
    <location>
        <begin position="294"/>
        <end position="314"/>
    </location>
</feature>
<feature type="transmembrane region" description="Helical" evidence="1">
    <location>
        <begin position="343"/>
        <end position="363"/>
    </location>
</feature>
<feature type="transmembrane region" description="Helical" evidence="1">
    <location>
        <begin position="373"/>
        <end position="393"/>
    </location>
</feature>
<feature type="transmembrane region" description="Helical" evidence="1">
    <location>
        <begin position="399"/>
        <end position="419"/>
    </location>
</feature>
<feature type="transmembrane region" description="Helical" evidence="1">
    <location>
        <begin position="424"/>
        <end position="444"/>
    </location>
</feature>
<comment type="function">
    <text evidence="1">Transport of potassium into the cell. Likely operates as a K(+):H(+) symporter.</text>
</comment>
<comment type="catalytic activity">
    <reaction evidence="1">
        <text>K(+)(in) + H(+)(in) = K(+)(out) + H(+)(out)</text>
        <dbReference type="Rhea" id="RHEA:28490"/>
        <dbReference type="ChEBI" id="CHEBI:15378"/>
        <dbReference type="ChEBI" id="CHEBI:29103"/>
    </reaction>
    <physiologicalReaction direction="right-to-left" evidence="1">
        <dbReference type="Rhea" id="RHEA:28492"/>
    </physiologicalReaction>
</comment>
<comment type="subcellular location">
    <subcellularLocation>
        <location evidence="1">Cell membrane</location>
        <topology evidence="1">Multi-pass membrane protein</topology>
    </subcellularLocation>
</comment>
<comment type="similarity">
    <text evidence="1">Belongs to the HAK/KUP transporter (TC 2.A.72) family.</text>
</comment>
<reference key="1">
    <citation type="journal article" date="2002" name="Proc. Natl. Acad. Sci. U.S.A.">
        <title>Genome sequence of a serotype M3 strain of group A Streptococcus: phage-encoded toxins, the high-virulence phenotype, and clone emergence.</title>
        <authorList>
            <person name="Beres S.B."/>
            <person name="Sylva G.L."/>
            <person name="Barbian K.D."/>
            <person name="Lei B."/>
            <person name="Hoff J.S."/>
            <person name="Mammarella N.D."/>
            <person name="Liu M.-Y."/>
            <person name="Smoot J.C."/>
            <person name="Porcella S.F."/>
            <person name="Parkins L.D."/>
            <person name="Campbell D.S."/>
            <person name="Smith T.M."/>
            <person name="McCormick J.K."/>
            <person name="Leung D.Y.M."/>
            <person name="Schlievert P.M."/>
            <person name="Musser J.M."/>
        </authorList>
    </citation>
    <scope>NUCLEOTIDE SEQUENCE [LARGE SCALE GENOMIC DNA]</scope>
    <source>
        <strain>ATCC BAA-595 / MGAS315</strain>
    </source>
</reference>
<protein>
    <recommendedName>
        <fullName evidence="1">Probable potassium transport system protein Kup</fullName>
    </recommendedName>
</protein>
<name>KUP_STRP3</name>
<proteinExistence type="inferred from homology"/>
<gene>
    <name evidence="1" type="primary">kup</name>
    <name type="ordered locus">SpyM3_1078</name>
</gene>
<dbReference type="EMBL" id="AE014074">
    <property type="protein sequence ID" value="AAM79685.1"/>
    <property type="molecule type" value="Genomic_DNA"/>
</dbReference>
<dbReference type="RefSeq" id="WP_011054663.1">
    <property type="nucleotide sequence ID" value="NC_004070.1"/>
</dbReference>
<dbReference type="KEGG" id="spg:SpyM3_1078"/>
<dbReference type="HOGENOM" id="CLU_008142_4_1_9"/>
<dbReference type="Proteomes" id="UP000000564">
    <property type="component" value="Chromosome"/>
</dbReference>
<dbReference type="GO" id="GO:0005886">
    <property type="term" value="C:plasma membrane"/>
    <property type="evidence" value="ECO:0007669"/>
    <property type="project" value="UniProtKB-SubCell"/>
</dbReference>
<dbReference type="GO" id="GO:0015079">
    <property type="term" value="F:potassium ion transmembrane transporter activity"/>
    <property type="evidence" value="ECO:0007669"/>
    <property type="project" value="UniProtKB-UniRule"/>
</dbReference>
<dbReference type="GO" id="GO:0015293">
    <property type="term" value="F:symporter activity"/>
    <property type="evidence" value="ECO:0007669"/>
    <property type="project" value="UniProtKB-UniRule"/>
</dbReference>
<dbReference type="HAMAP" id="MF_01522">
    <property type="entry name" value="Kup"/>
    <property type="match status" value="1"/>
</dbReference>
<dbReference type="InterPro" id="IPR003855">
    <property type="entry name" value="K+_transporter"/>
</dbReference>
<dbReference type="InterPro" id="IPR053952">
    <property type="entry name" value="K_trans_C"/>
</dbReference>
<dbReference type="InterPro" id="IPR053951">
    <property type="entry name" value="K_trans_N"/>
</dbReference>
<dbReference type="InterPro" id="IPR023051">
    <property type="entry name" value="Kup"/>
</dbReference>
<dbReference type="PANTHER" id="PTHR30540:SF83">
    <property type="entry name" value="K+ POTASSIUM TRANSPORTER"/>
    <property type="match status" value="1"/>
</dbReference>
<dbReference type="PANTHER" id="PTHR30540">
    <property type="entry name" value="OSMOTIC STRESS POTASSIUM TRANSPORTER"/>
    <property type="match status" value="1"/>
</dbReference>
<dbReference type="Pfam" id="PF02705">
    <property type="entry name" value="K_trans"/>
    <property type="match status" value="1"/>
</dbReference>
<dbReference type="Pfam" id="PF22776">
    <property type="entry name" value="K_trans_C"/>
    <property type="match status" value="1"/>
</dbReference>
<keyword id="KW-1003">Cell membrane</keyword>
<keyword id="KW-0406">Ion transport</keyword>
<keyword id="KW-0472">Membrane</keyword>
<keyword id="KW-0630">Potassium</keyword>
<keyword id="KW-0633">Potassium transport</keyword>
<keyword id="KW-0769">Symport</keyword>
<keyword id="KW-0812">Transmembrane</keyword>
<keyword id="KW-1133">Transmembrane helix</keyword>
<keyword id="KW-0813">Transport</keyword>
<organism>
    <name type="scientific">Streptococcus pyogenes serotype M3 (strain ATCC BAA-595 / MGAS315)</name>
    <dbReference type="NCBI Taxonomy" id="198466"/>
    <lineage>
        <taxon>Bacteria</taxon>
        <taxon>Bacillati</taxon>
        <taxon>Bacillota</taxon>
        <taxon>Bacilli</taxon>
        <taxon>Lactobacillales</taxon>
        <taxon>Streptococcaceae</taxon>
        <taxon>Streptococcus</taxon>
    </lineage>
</organism>